<proteinExistence type="inferred from homology"/>
<feature type="chain" id="PRO_1000164996" description="Putative N-acetylmannosamine-6-phosphate 2-epimerase">
    <location>
        <begin position="1"/>
        <end position="234"/>
    </location>
</feature>
<reference key="1">
    <citation type="journal article" date="2009" name="BMC Genomics">
        <title>Evidence for niche adaptation in the genome of the bovine pathogen Streptococcus uberis.</title>
        <authorList>
            <person name="Ward P.N."/>
            <person name="Holden M.T.G."/>
            <person name="Leigh J.A."/>
            <person name="Lennard N."/>
            <person name="Bignell A."/>
            <person name="Barron A."/>
            <person name="Clark L."/>
            <person name="Quail M.A."/>
            <person name="Woodward J."/>
            <person name="Barrell B.G."/>
            <person name="Egan S.A."/>
            <person name="Field T.R."/>
            <person name="Maskell D."/>
            <person name="Kehoe M."/>
            <person name="Dowson C.G."/>
            <person name="Chanter N."/>
            <person name="Whatmore A.M."/>
            <person name="Bentley S.D."/>
            <person name="Parkhill J."/>
        </authorList>
    </citation>
    <scope>NUCLEOTIDE SEQUENCE [LARGE SCALE GENOMIC DNA]</scope>
    <source>
        <strain>ATCC BAA-854 / 0140J</strain>
    </source>
</reference>
<evidence type="ECO:0000255" key="1">
    <source>
        <dbReference type="HAMAP-Rule" id="MF_01235"/>
    </source>
</evidence>
<dbReference type="EC" id="5.1.3.9" evidence="1"/>
<dbReference type="EMBL" id="AM946015">
    <property type="protein sequence ID" value="CAR43538.1"/>
    <property type="molecule type" value="Genomic_DNA"/>
</dbReference>
<dbReference type="RefSeq" id="WP_015911956.1">
    <property type="nucleotide sequence ID" value="NC_012004.1"/>
</dbReference>
<dbReference type="SMR" id="B9DVU8"/>
<dbReference type="STRING" id="218495.SUB1658"/>
<dbReference type="KEGG" id="sub:SUB1658"/>
<dbReference type="eggNOG" id="COG3010">
    <property type="taxonomic scope" value="Bacteria"/>
</dbReference>
<dbReference type="HOGENOM" id="CLU_086300_1_0_9"/>
<dbReference type="OrthoDB" id="9781704at2"/>
<dbReference type="UniPathway" id="UPA00629">
    <property type="reaction ID" value="UER00682"/>
</dbReference>
<dbReference type="Proteomes" id="UP000000449">
    <property type="component" value="Chromosome"/>
</dbReference>
<dbReference type="GO" id="GO:0005829">
    <property type="term" value="C:cytosol"/>
    <property type="evidence" value="ECO:0007669"/>
    <property type="project" value="TreeGrafter"/>
</dbReference>
<dbReference type="GO" id="GO:0047465">
    <property type="term" value="F:N-acylglucosamine-6-phosphate 2-epimerase activity"/>
    <property type="evidence" value="ECO:0007669"/>
    <property type="project" value="UniProtKB-EC"/>
</dbReference>
<dbReference type="GO" id="GO:0005975">
    <property type="term" value="P:carbohydrate metabolic process"/>
    <property type="evidence" value="ECO:0007669"/>
    <property type="project" value="UniProtKB-UniRule"/>
</dbReference>
<dbReference type="GO" id="GO:0006053">
    <property type="term" value="P:N-acetylmannosamine catabolic process"/>
    <property type="evidence" value="ECO:0007669"/>
    <property type="project" value="TreeGrafter"/>
</dbReference>
<dbReference type="GO" id="GO:0019262">
    <property type="term" value="P:N-acetylneuraminate catabolic process"/>
    <property type="evidence" value="ECO:0007669"/>
    <property type="project" value="UniProtKB-UniRule"/>
</dbReference>
<dbReference type="CDD" id="cd04729">
    <property type="entry name" value="NanE"/>
    <property type="match status" value="1"/>
</dbReference>
<dbReference type="FunFam" id="3.20.20.70:FF:000035">
    <property type="entry name" value="Putative N-acetylmannosamine-6-phosphate 2-epimerase"/>
    <property type="match status" value="1"/>
</dbReference>
<dbReference type="Gene3D" id="3.20.20.70">
    <property type="entry name" value="Aldolase class I"/>
    <property type="match status" value="1"/>
</dbReference>
<dbReference type="HAMAP" id="MF_01235">
    <property type="entry name" value="ManNAc6P_epimer"/>
    <property type="match status" value="1"/>
</dbReference>
<dbReference type="InterPro" id="IPR013785">
    <property type="entry name" value="Aldolase_TIM"/>
</dbReference>
<dbReference type="InterPro" id="IPR007260">
    <property type="entry name" value="NanE"/>
</dbReference>
<dbReference type="InterPro" id="IPR011060">
    <property type="entry name" value="RibuloseP-bd_barrel"/>
</dbReference>
<dbReference type="NCBIfam" id="NF002231">
    <property type="entry name" value="PRK01130.1"/>
    <property type="match status" value="1"/>
</dbReference>
<dbReference type="PANTHER" id="PTHR36204">
    <property type="entry name" value="N-ACETYLMANNOSAMINE-6-PHOSPHATE 2-EPIMERASE-RELATED"/>
    <property type="match status" value="1"/>
</dbReference>
<dbReference type="PANTHER" id="PTHR36204:SF1">
    <property type="entry name" value="N-ACETYLMANNOSAMINE-6-PHOSPHATE 2-EPIMERASE-RELATED"/>
    <property type="match status" value="1"/>
</dbReference>
<dbReference type="Pfam" id="PF04131">
    <property type="entry name" value="NanE"/>
    <property type="match status" value="1"/>
</dbReference>
<dbReference type="SUPFAM" id="SSF51366">
    <property type="entry name" value="Ribulose-phoshate binding barrel"/>
    <property type="match status" value="1"/>
</dbReference>
<organism>
    <name type="scientific">Streptococcus uberis (strain ATCC BAA-854 / 0140J)</name>
    <dbReference type="NCBI Taxonomy" id="218495"/>
    <lineage>
        <taxon>Bacteria</taxon>
        <taxon>Bacillati</taxon>
        <taxon>Bacillota</taxon>
        <taxon>Bacilli</taxon>
        <taxon>Lactobacillales</taxon>
        <taxon>Streptococcaceae</taxon>
        <taxon>Streptococcus</taxon>
    </lineage>
</organism>
<keyword id="KW-0119">Carbohydrate metabolism</keyword>
<keyword id="KW-0413">Isomerase</keyword>
<keyword id="KW-1185">Reference proteome</keyword>
<protein>
    <recommendedName>
        <fullName evidence="1">Putative N-acetylmannosamine-6-phosphate 2-epimerase</fullName>
        <ecNumber evidence="1">5.1.3.9</ecNumber>
    </recommendedName>
    <alternativeName>
        <fullName evidence="1">ManNAc-6-P epimerase</fullName>
    </alternativeName>
</protein>
<accession>B9DVU8</accession>
<sequence>MPDRISKETFLTNIKDGIIVSCQALPGEPLYSPEGGVMPLMAKAAEEAGAVGIRANSVRDIKEIQAVTDLPIIGIIKKDYPPQEPFITATMAEVDQLAELGIAVIALDCTKRQRYDGRPIEDFIREIKRKYPNQLFMADISTFEEGLKAFEAGIDFVGTTLSGYTSYSRQQEGPDMTLIAELCQEGIPVIAEGRIHTPEQARQINELGVAGIVIGGAITRPKEIAARFIKALKD</sequence>
<name>NANE_STRU0</name>
<gene>
    <name evidence="1" type="primary">nanE</name>
    <name type="ordered locus">SUB1658</name>
</gene>
<comment type="function">
    <text evidence="1">Converts N-acetylmannosamine-6-phosphate (ManNAc-6-P) to N-acetylglucosamine-6-phosphate (GlcNAc-6-P).</text>
</comment>
<comment type="catalytic activity">
    <reaction evidence="1">
        <text>an N-acyl-D-glucosamine 6-phosphate = an N-acyl-D-mannosamine 6-phosphate</text>
        <dbReference type="Rhea" id="RHEA:23932"/>
        <dbReference type="ChEBI" id="CHEBI:57599"/>
        <dbReference type="ChEBI" id="CHEBI:57666"/>
        <dbReference type="EC" id="5.1.3.9"/>
    </reaction>
</comment>
<comment type="pathway">
    <text evidence="1">Amino-sugar metabolism; N-acetylneuraminate degradation; D-fructose 6-phosphate from N-acetylneuraminate: step 3/5.</text>
</comment>
<comment type="similarity">
    <text evidence="1">Belongs to the NanE family.</text>
</comment>